<keyword id="KW-0997">Cell inner membrane</keyword>
<keyword id="KW-1003">Cell membrane</keyword>
<keyword id="KW-0472">Membrane</keyword>
<keyword id="KW-0520">NAD</keyword>
<keyword id="KW-0560">Oxidoreductase</keyword>
<name>KEFG_SALSV</name>
<organism>
    <name type="scientific">Salmonella schwarzengrund (strain CVM19633)</name>
    <dbReference type="NCBI Taxonomy" id="439843"/>
    <lineage>
        <taxon>Bacteria</taxon>
        <taxon>Pseudomonadati</taxon>
        <taxon>Pseudomonadota</taxon>
        <taxon>Gammaproteobacteria</taxon>
        <taxon>Enterobacterales</taxon>
        <taxon>Enterobacteriaceae</taxon>
        <taxon>Salmonella</taxon>
    </lineage>
</organism>
<dbReference type="EC" id="1.6.5.2" evidence="1"/>
<dbReference type="EMBL" id="CP001127">
    <property type="protein sequence ID" value="ACF92233.1"/>
    <property type="molecule type" value="Genomic_DNA"/>
</dbReference>
<dbReference type="RefSeq" id="WP_000081820.1">
    <property type="nucleotide sequence ID" value="NC_011094.1"/>
</dbReference>
<dbReference type="SMR" id="B4TXG0"/>
<dbReference type="KEGG" id="sew:SeSA_A3654"/>
<dbReference type="HOGENOM" id="CLU_058643_0_1_6"/>
<dbReference type="Proteomes" id="UP000001865">
    <property type="component" value="Chromosome"/>
</dbReference>
<dbReference type="GO" id="GO:0005886">
    <property type="term" value="C:plasma membrane"/>
    <property type="evidence" value="ECO:0007669"/>
    <property type="project" value="UniProtKB-SubCell"/>
</dbReference>
<dbReference type="GO" id="GO:0009055">
    <property type="term" value="F:electron transfer activity"/>
    <property type="evidence" value="ECO:0007669"/>
    <property type="project" value="TreeGrafter"/>
</dbReference>
<dbReference type="GO" id="GO:0010181">
    <property type="term" value="F:FMN binding"/>
    <property type="evidence" value="ECO:0007669"/>
    <property type="project" value="TreeGrafter"/>
</dbReference>
<dbReference type="GO" id="GO:0050136">
    <property type="term" value="F:NADH:ubiquinone reductase (non-electrogenic) activity"/>
    <property type="evidence" value="ECO:0007669"/>
    <property type="project" value="RHEA"/>
</dbReference>
<dbReference type="GO" id="GO:0008753">
    <property type="term" value="F:NADPH dehydrogenase (quinone) activity"/>
    <property type="evidence" value="ECO:0007669"/>
    <property type="project" value="RHEA"/>
</dbReference>
<dbReference type="GO" id="GO:1901381">
    <property type="term" value="P:positive regulation of potassium ion transmembrane transport"/>
    <property type="evidence" value="ECO:0007669"/>
    <property type="project" value="UniProtKB-UniRule"/>
</dbReference>
<dbReference type="GO" id="GO:0006813">
    <property type="term" value="P:potassium ion transport"/>
    <property type="evidence" value="ECO:0007669"/>
    <property type="project" value="InterPro"/>
</dbReference>
<dbReference type="FunFam" id="3.40.50.360:FF:000013">
    <property type="entry name" value="Glutathione-regulated potassium-efflux system ancillary protein KefG"/>
    <property type="match status" value="1"/>
</dbReference>
<dbReference type="Gene3D" id="3.40.50.360">
    <property type="match status" value="1"/>
</dbReference>
<dbReference type="HAMAP" id="MF_01415">
    <property type="entry name" value="K_H_efflux_KefG"/>
    <property type="match status" value="1"/>
</dbReference>
<dbReference type="InterPro" id="IPR003680">
    <property type="entry name" value="Flavodoxin_fold"/>
</dbReference>
<dbReference type="InterPro" id="IPR029039">
    <property type="entry name" value="Flavoprotein-like_sf"/>
</dbReference>
<dbReference type="InterPro" id="IPR023947">
    <property type="entry name" value="K_H_efflux_KefG"/>
</dbReference>
<dbReference type="InterPro" id="IPR046980">
    <property type="entry name" value="KefG/KefF"/>
</dbReference>
<dbReference type="NCBIfam" id="NF003430">
    <property type="entry name" value="PRK04930.1"/>
    <property type="match status" value="1"/>
</dbReference>
<dbReference type="PANTHER" id="PTHR47307">
    <property type="entry name" value="GLUTATHIONE-REGULATED POTASSIUM-EFFLUX SYSTEM ANCILLARY PROTEIN KEFG"/>
    <property type="match status" value="1"/>
</dbReference>
<dbReference type="PANTHER" id="PTHR47307:SF1">
    <property type="entry name" value="GLUTATHIONE-REGULATED POTASSIUM-EFFLUX SYSTEM ANCILLARY PROTEIN KEFG"/>
    <property type="match status" value="1"/>
</dbReference>
<dbReference type="Pfam" id="PF02525">
    <property type="entry name" value="Flavodoxin_2"/>
    <property type="match status" value="1"/>
</dbReference>
<dbReference type="SUPFAM" id="SSF52218">
    <property type="entry name" value="Flavoproteins"/>
    <property type="match status" value="1"/>
</dbReference>
<comment type="function">
    <text evidence="1">Regulatory subunit of a potassium efflux system that confers protection against electrophiles. Required for full activity of KefB.</text>
</comment>
<comment type="catalytic activity">
    <reaction evidence="1">
        <text>a quinone + NADH + H(+) = a quinol + NAD(+)</text>
        <dbReference type="Rhea" id="RHEA:46160"/>
        <dbReference type="ChEBI" id="CHEBI:15378"/>
        <dbReference type="ChEBI" id="CHEBI:24646"/>
        <dbReference type="ChEBI" id="CHEBI:57540"/>
        <dbReference type="ChEBI" id="CHEBI:57945"/>
        <dbReference type="ChEBI" id="CHEBI:132124"/>
        <dbReference type="EC" id="1.6.5.2"/>
    </reaction>
</comment>
<comment type="catalytic activity">
    <reaction evidence="1">
        <text>a quinone + NADPH + H(+) = a quinol + NADP(+)</text>
        <dbReference type="Rhea" id="RHEA:46164"/>
        <dbReference type="ChEBI" id="CHEBI:15378"/>
        <dbReference type="ChEBI" id="CHEBI:24646"/>
        <dbReference type="ChEBI" id="CHEBI:57783"/>
        <dbReference type="ChEBI" id="CHEBI:58349"/>
        <dbReference type="ChEBI" id="CHEBI:132124"/>
        <dbReference type="EC" id="1.6.5.2"/>
    </reaction>
</comment>
<comment type="subunit">
    <text evidence="1">Interacts with KefB.</text>
</comment>
<comment type="subcellular location">
    <subcellularLocation>
        <location evidence="1">Cell inner membrane</location>
        <topology evidence="1">Peripheral membrane protein</topology>
        <orientation evidence="1">Cytoplasmic side</orientation>
    </subcellularLocation>
</comment>
<comment type="similarity">
    <text evidence="1">Belongs to the NAD(P)H dehydrogenase (quinone) family. KefG subfamily.</text>
</comment>
<sequence>MSQPAKVLLLYAHPESQDSVANRVLLKPAIQHNNVTVHDLYARYPDFFIDTPYEQALLREHDVIVFQHPLYTYSCPALLKEWLDRVLSRGFASGPGGNQLVGKYWRSVITTGEPESAYRYDALNRYPMSDVLRPFELTAAMCRMHWMPPIIVYWARRQSPQTLASHAKAYGEWLANPVSAGGY</sequence>
<protein>
    <recommendedName>
        <fullName evidence="1">Glutathione-regulated potassium-efflux system ancillary protein KefG</fullName>
    </recommendedName>
    <alternativeName>
        <fullName evidence="1">Putative quinone oxidoreductase KefG</fullName>
        <ecNumber evidence="1">1.6.5.2</ecNumber>
    </alternativeName>
</protein>
<proteinExistence type="inferred from homology"/>
<feature type="chain" id="PRO_1000145588" description="Glutathione-regulated potassium-efflux system ancillary protein KefG">
    <location>
        <begin position="1"/>
        <end position="183"/>
    </location>
</feature>
<gene>
    <name evidence="1" type="primary">kefG</name>
    <name type="ordered locus">SeSA_A3654</name>
</gene>
<evidence type="ECO:0000255" key="1">
    <source>
        <dbReference type="HAMAP-Rule" id="MF_01415"/>
    </source>
</evidence>
<accession>B4TXG0</accession>
<reference key="1">
    <citation type="journal article" date="2011" name="J. Bacteriol.">
        <title>Comparative genomics of 28 Salmonella enterica isolates: evidence for CRISPR-mediated adaptive sublineage evolution.</title>
        <authorList>
            <person name="Fricke W.F."/>
            <person name="Mammel M.K."/>
            <person name="McDermott P.F."/>
            <person name="Tartera C."/>
            <person name="White D.G."/>
            <person name="Leclerc J.E."/>
            <person name="Ravel J."/>
            <person name="Cebula T.A."/>
        </authorList>
    </citation>
    <scope>NUCLEOTIDE SEQUENCE [LARGE SCALE GENOMIC DNA]</scope>
    <source>
        <strain>CVM19633</strain>
    </source>
</reference>